<feature type="chain" id="PRO_0000234500" description="Coiled-coil domain-containing protein 43">
    <location>
        <begin position="1"/>
        <end position="224"/>
    </location>
</feature>
<feature type="region of interest" description="Disordered" evidence="2">
    <location>
        <begin position="138"/>
        <end position="157"/>
    </location>
</feature>
<feature type="region of interest" description="Disordered" evidence="2">
    <location>
        <begin position="176"/>
        <end position="224"/>
    </location>
</feature>
<feature type="coiled-coil region" evidence="1">
    <location>
        <begin position="121"/>
        <end position="145"/>
    </location>
</feature>
<feature type="coiled-coil region" evidence="1">
    <location>
        <begin position="177"/>
        <end position="218"/>
    </location>
</feature>
<feature type="compositionally biased region" description="Acidic residues" evidence="2">
    <location>
        <begin position="138"/>
        <end position="149"/>
    </location>
</feature>
<feature type="compositionally biased region" description="Basic and acidic residues" evidence="2">
    <location>
        <begin position="176"/>
        <end position="211"/>
    </location>
</feature>
<feature type="compositionally biased region" description="Basic residues" evidence="2">
    <location>
        <begin position="212"/>
        <end position="224"/>
    </location>
</feature>
<feature type="modified residue" description="Phosphothreonine" evidence="5 6 7 8">
    <location>
        <position position="139"/>
    </location>
</feature>
<feature type="cross-link" description="Glycyl lysine isopeptide (Lys-Gly) (interchain with G-Cter in SUMO1)" evidence="9">
    <location>
        <position position="95"/>
    </location>
</feature>
<feature type="splice variant" id="VSP_040750" description="In isoform 2." evidence="3">
    <original>EADEKDDSGATTMNIGSDKLLFRNTNVEDVLNARKLERDSLRDESQRKKEQDKLQRERDKLAKQERKEKEKKRTQRGERKR</original>
    <variation>SVPKHQCGRCP</variation>
    <location>
        <begin position="144"/>
        <end position="224"/>
    </location>
</feature>
<feature type="sequence conflict" description="In Ref. 1; BAB71162." evidence="4" ref="1">
    <original>L</original>
    <variation>F</variation>
    <location>
        <position position="174"/>
    </location>
</feature>
<dbReference type="EMBL" id="AK056357">
    <property type="protein sequence ID" value="BAB71162.1"/>
    <property type="molecule type" value="mRNA"/>
</dbReference>
<dbReference type="EMBL" id="BX648868">
    <property type="status" value="NOT_ANNOTATED_CDS"/>
    <property type="molecule type" value="mRNA"/>
</dbReference>
<dbReference type="EMBL" id="AC091152">
    <property type="status" value="NOT_ANNOTATED_CDS"/>
    <property type="molecule type" value="Genomic_DNA"/>
</dbReference>
<dbReference type="CCDS" id="CCDS45704.1">
    <molecule id="Q96MW1-1"/>
</dbReference>
<dbReference type="CCDS" id="CCDS45705.1">
    <molecule id="Q96MW1-2"/>
</dbReference>
<dbReference type="RefSeq" id="NP_001092695.1">
    <molecule id="Q96MW1-2"/>
    <property type="nucleotide sequence ID" value="NM_001099225.2"/>
</dbReference>
<dbReference type="RefSeq" id="NP_653210.2">
    <molecule id="Q96MW1-1"/>
    <property type="nucleotide sequence ID" value="NM_144609.3"/>
</dbReference>
<dbReference type="BioGRID" id="125890">
    <property type="interactions" value="56"/>
</dbReference>
<dbReference type="FunCoup" id="Q96MW1">
    <property type="interactions" value="1340"/>
</dbReference>
<dbReference type="IntAct" id="Q96MW1">
    <property type="interactions" value="37"/>
</dbReference>
<dbReference type="MINT" id="Q96MW1"/>
<dbReference type="STRING" id="9606.ENSP00000323782"/>
<dbReference type="GlyGen" id="Q96MW1">
    <property type="glycosylation" value="1 site, 1 O-linked glycan (1 site)"/>
</dbReference>
<dbReference type="iPTMnet" id="Q96MW1"/>
<dbReference type="PhosphoSitePlus" id="Q96MW1"/>
<dbReference type="BioMuta" id="CCDC43"/>
<dbReference type="DMDM" id="296434426"/>
<dbReference type="jPOST" id="Q96MW1"/>
<dbReference type="MassIVE" id="Q96MW1"/>
<dbReference type="PaxDb" id="9606-ENSP00000323782"/>
<dbReference type="PeptideAtlas" id="Q96MW1"/>
<dbReference type="ProteomicsDB" id="77422">
    <molecule id="Q96MW1-1"/>
</dbReference>
<dbReference type="ProteomicsDB" id="77423">
    <molecule id="Q96MW1-2"/>
</dbReference>
<dbReference type="Pumba" id="Q96MW1"/>
<dbReference type="Antibodypedia" id="8262">
    <property type="antibodies" value="75 antibodies from 14 providers"/>
</dbReference>
<dbReference type="DNASU" id="124808"/>
<dbReference type="Ensembl" id="ENST00000315286.13">
    <molecule id="Q96MW1-1"/>
    <property type="protein sequence ID" value="ENSP00000323782.7"/>
    <property type="gene ID" value="ENSG00000180329.14"/>
</dbReference>
<dbReference type="Ensembl" id="ENST00000457422.6">
    <molecule id="Q96MW1-2"/>
    <property type="protein sequence ID" value="ENSP00000400845.1"/>
    <property type="gene ID" value="ENSG00000180329.14"/>
</dbReference>
<dbReference type="GeneID" id="124808"/>
<dbReference type="KEGG" id="hsa:124808"/>
<dbReference type="MANE-Select" id="ENST00000315286.13">
    <property type="protein sequence ID" value="ENSP00000323782.7"/>
    <property type="RefSeq nucleotide sequence ID" value="NM_144609.3"/>
    <property type="RefSeq protein sequence ID" value="NP_653210.2"/>
</dbReference>
<dbReference type="UCSC" id="uc002ihc.3">
    <molecule id="Q96MW1-1"/>
    <property type="organism name" value="human"/>
</dbReference>
<dbReference type="AGR" id="HGNC:26472"/>
<dbReference type="CTD" id="124808"/>
<dbReference type="DisGeNET" id="124808"/>
<dbReference type="GeneCards" id="CCDC43"/>
<dbReference type="HGNC" id="HGNC:26472">
    <property type="gene designation" value="CCDC43"/>
</dbReference>
<dbReference type="HPA" id="ENSG00000180329">
    <property type="expression patterns" value="Tissue enhanced (skeletal)"/>
</dbReference>
<dbReference type="neXtProt" id="NX_Q96MW1"/>
<dbReference type="OpenTargets" id="ENSG00000180329"/>
<dbReference type="PharmGKB" id="PA142672160"/>
<dbReference type="VEuPathDB" id="HostDB:ENSG00000180329"/>
<dbReference type="eggNOG" id="ENOG502RYDM">
    <property type="taxonomic scope" value="Eukaryota"/>
</dbReference>
<dbReference type="GeneTree" id="ENSGT00390000015009"/>
<dbReference type="HOGENOM" id="CLU_079381_2_0_1"/>
<dbReference type="InParanoid" id="Q96MW1"/>
<dbReference type="OrthoDB" id="2187466at2759"/>
<dbReference type="PAN-GO" id="Q96MW1">
    <property type="GO annotations" value="0 GO annotations based on evolutionary models"/>
</dbReference>
<dbReference type="PhylomeDB" id="Q96MW1"/>
<dbReference type="TreeFam" id="TF324859"/>
<dbReference type="PathwayCommons" id="Q96MW1"/>
<dbReference type="SignaLink" id="Q96MW1"/>
<dbReference type="BioGRID-ORCS" id="124808">
    <property type="hits" value="59 hits in 1168 CRISPR screens"/>
</dbReference>
<dbReference type="ChiTaRS" id="CCDC43">
    <property type="organism name" value="human"/>
</dbReference>
<dbReference type="GenomeRNAi" id="124808"/>
<dbReference type="Pharos" id="Q96MW1">
    <property type="development level" value="Tdark"/>
</dbReference>
<dbReference type="PRO" id="PR:Q96MW1"/>
<dbReference type="Proteomes" id="UP000005640">
    <property type="component" value="Chromosome 17"/>
</dbReference>
<dbReference type="RNAct" id="Q96MW1">
    <property type="molecule type" value="protein"/>
</dbReference>
<dbReference type="Bgee" id="ENSG00000180329">
    <property type="expression patterns" value="Expressed in deltoid and 181 other cell types or tissues"/>
</dbReference>
<dbReference type="ExpressionAtlas" id="Q96MW1">
    <property type="expression patterns" value="baseline and differential"/>
</dbReference>
<dbReference type="GO" id="GO:0005829">
    <property type="term" value="C:cytosol"/>
    <property type="evidence" value="ECO:0000314"/>
    <property type="project" value="HPA"/>
</dbReference>
<dbReference type="InterPro" id="IPR037666">
    <property type="entry name" value="CCDC43"/>
</dbReference>
<dbReference type="PANTHER" id="PTHR31684">
    <property type="entry name" value="COILED-COIL DOMAIN-CONTAINING PROTEIN 43"/>
    <property type="match status" value="1"/>
</dbReference>
<dbReference type="PANTHER" id="PTHR31684:SF2">
    <property type="entry name" value="COILED-COIL DOMAIN-CONTAINING PROTEIN 43"/>
    <property type="match status" value="1"/>
</dbReference>
<organism>
    <name type="scientific">Homo sapiens</name>
    <name type="common">Human</name>
    <dbReference type="NCBI Taxonomy" id="9606"/>
    <lineage>
        <taxon>Eukaryota</taxon>
        <taxon>Metazoa</taxon>
        <taxon>Chordata</taxon>
        <taxon>Craniata</taxon>
        <taxon>Vertebrata</taxon>
        <taxon>Euteleostomi</taxon>
        <taxon>Mammalia</taxon>
        <taxon>Eutheria</taxon>
        <taxon>Euarchontoglires</taxon>
        <taxon>Primates</taxon>
        <taxon>Haplorrhini</taxon>
        <taxon>Catarrhini</taxon>
        <taxon>Hominidae</taxon>
        <taxon>Homo</taxon>
    </lineage>
</organism>
<accession>Q96MW1</accession>
<accession>C9JVK9</accession>
<sequence length="224" mass="25248">MAAPSEVAAIAPGEGDGGGGGFGSWLDGRLEALGVDRAVYGAYILGILQEEEEEEKLDALQGILSAFLEEDSLLNICKEIVERWSETQNVVTKVKKEDEVQAIATLIEKQAQIVVKPRMVSEEEKQRKAALLAQYADVTDEEDEADEKDDSGATTMNIGSDKLLFRNTNVEDVLNARKLERDSLRDESQRKKEQDKLQRERDKLAKQERKEKEKKRTQRGERKR</sequence>
<comment type="interaction">
    <interactant intactId="EBI-9247198">
        <id>Q96MW1</id>
    </interactant>
    <interactant intactId="EBI-746999">
        <id>O95198</id>
        <label>KLHL2</label>
    </interactant>
    <organismsDiffer>false</organismsDiffer>
    <experiments>3</experiments>
</comment>
<comment type="interaction">
    <interactant intactId="EBI-9247198">
        <id>Q96MW1</id>
    </interactant>
    <interactant intactId="EBI-717399">
        <id>Q9BSI4</id>
        <label>TINF2</label>
    </interactant>
    <organismsDiffer>false</organismsDiffer>
    <experiments>2</experiments>
</comment>
<comment type="alternative products">
    <event type="alternative splicing"/>
    <isoform>
        <id>Q96MW1-1</id>
        <name>1</name>
        <sequence type="displayed"/>
    </isoform>
    <isoform>
        <id>Q96MW1-2</id>
        <name>2</name>
        <sequence type="described" ref="VSP_040750"/>
    </isoform>
</comment>
<comment type="similarity">
    <text evidence="4">Belongs to the CCDC43 family.</text>
</comment>
<proteinExistence type="evidence at protein level"/>
<name>CCD43_HUMAN</name>
<reference key="1">
    <citation type="journal article" date="2004" name="Nat. Genet.">
        <title>Complete sequencing and characterization of 21,243 full-length human cDNAs.</title>
        <authorList>
            <person name="Ota T."/>
            <person name="Suzuki Y."/>
            <person name="Nishikawa T."/>
            <person name="Otsuki T."/>
            <person name="Sugiyama T."/>
            <person name="Irie R."/>
            <person name="Wakamatsu A."/>
            <person name="Hayashi K."/>
            <person name="Sato H."/>
            <person name="Nagai K."/>
            <person name="Kimura K."/>
            <person name="Makita H."/>
            <person name="Sekine M."/>
            <person name="Obayashi M."/>
            <person name="Nishi T."/>
            <person name="Shibahara T."/>
            <person name="Tanaka T."/>
            <person name="Ishii S."/>
            <person name="Yamamoto J."/>
            <person name="Saito K."/>
            <person name="Kawai Y."/>
            <person name="Isono Y."/>
            <person name="Nakamura Y."/>
            <person name="Nagahari K."/>
            <person name="Murakami K."/>
            <person name="Yasuda T."/>
            <person name="Iwayanagi T."/>
            <person name="Wagatsuma M."/>
            <person name="Shiratori A."/>
            <person name="Sudo H."/>
            <person name="Hosoiri T."/>
            <person name="Kaku Y."/>
            <person name="Kodaira H."/>
            <person name="Kondo H."/>
            <person name="Sugawara M."/>
            <person name="Takahashi M."/>
            <person name="Kanda K."/>
            <person name="Yokoi T."/>
            <person name="Furuya T."/>
            <person name="Kikkawa E."/>
            <person name="Omura Y."/>
            <person name="Abe K."/>
            <person name="Kamihara K."/>
            <person name="Katsuta N."/>
            <person name="Sato K."/>
            <person name="Tanikawa M."/>
            <person name="Yamazaki M."/>
            <person name="Ninomiya K."/>
            <person name="Ishibashi T."/>
            <person name="Yamashita H."/>
            <person name="Murakawa K."/>
            <person name="Fujimori K."/>
            <person name="Tanai H."/>
            <person name="Kimata M."/>
            <person name="Watanabe M."/>
            <person name="Hiraoka S."/>
            <person name="Chiba Y."/>
            <person name="Ishida S."/>
            <person name="Ono Y."/>
            <person name="Takiguchi S."/>
            <person name="Watanabe S."/>
            <person name="Yosida M."/>
            <person name="Hotuta T."/>
            <person name="Kusano J."/>
            <person name="Kanehori K."/>
            <person name="Takahashi-Fujii A."/>
            <person name="Hara H."/>
            <person name="Tanase T.-O."/>
            <person name="Nomura Y."/>
            <person name="Togiya S."/>
            <person name="Komai F."/>
            <person name="Hara R."/>
            <person name="Takeuchi K."/>
            <person name="Arita M."/>
            <person name="Imose N."/>
            <person name="Musashino K."/>
            <person name="Yuuki H."/>
            <person name="Oshima A."/>
            <person name="Sasaki N."/>
            <person name="Aotsuka S."/>
            <person name="Yoshikawa Y."/>
            <person name="Matsunawa H."/>
            <person name="Ichihara T."/>
            <person name="Shiohata N."/>
            <person name="Sano S."/>
            <person name="Moriya S."/>
            <person name="Momiyama H."/>
            <person name="Satoh N."/>
            <person name="Takami S."/>
            <person name="Terashima Y."/>
            <person name="Suzuki O."/>
            <person name="Nakagawa S."/>
            <person name="Senoh A."/>
            <person name="Mizoguchi H."/>
            <person name="Goto Y."/>
            <person name="Shimizu F."/>
            <person name="Wakebe H."/>
            <person name="Hishigaki H."/>
            <person name="Watanabe T."/>
            <person name="Sugiyama A."/>
            <person name="Takemoto M."/>
            <person name="Kawakami B."/>
            <person name="Yamazaki M."/>
            <person name="Watanabe K."/>
            <person name="Kumagai A."/>
            <person name="Itakura S."/>
            <person name="Fukuzumi Y."/>
            <person name="Fujimori Y."/>
            <person name="Komiyama M."/>
            <person name="Tashiro H."/>
            <person name="Tanigami A."/>
            <person name="Fujiwara T."/>
            <person name="Ono T."/>
            <person name="Yamada K."/>
            <person name="Fujii Y."/>
            <person name="Ozaki K."/>
            <person name="Hirao M."/>
            <person name="Ohmori Y."/>
            <person name="Kawabata A."/>
            <person name="Hikiji T."/>
            <person name="Kobatake N."/>
            <person name="Inagaki H."/>
            <person name="Ikema Y."/>
            <person name="Okamoto S."/>
            <person name="Okitani R."/>
            <person name="Kawakami T."/>
            <person name="Noguchi S."/>
            <person name="Itoh T."/>
            <person name="Shigeta K."/>
            <person name="Senba T."/>
            <person name="Matsumura K."/>
            <person name="Nakajima Y."/>
            <person name="Mizuno T."/>
            <person name="Morinaga M."/>
            <person name="Sasaki M."/>
            <person name="Togashi T."/>
            <person name="Oyama M."/>
            <person name="Hata H."/>
            <person name="Watanabe M."/>
            <person name="Komatsu T."/>
            <person name="Mizushima-Sugano J."/>
            <person name="Satoh T."/>
            <person name="Shirai Y."/>
            <person name="Takahashi Y."/>
            <person name="Nakagawa K."/>
            <person name="Okumura K."/>
            <person name="Nagase T."/>
            <person name="Nomura N."/>
            <person name="Kikuchi H."/>
            <person name="Masuho Y."/>
            <person name="Yamashita R."/>
            <person name="Nakai K."/>
            <person name="Yada T."/>
            <person name="Nakamura Y."/>
            <person name="Ohara O."/>
            <person name="Isogai T."/>
            <person name="Sugano S."/>
        </authorList>
    </citation>
    <scope>NUCLEOTIDE SEQUENCE [LARGE SCALE MRNA] (ISOFORM 1)</scope>
</reference>
<reference key="2">
    <citation type="journal article" date="2007" name="BMC Genomics">
        <title>The full-ORF clone resource of the German cDNA consortium.</title>
        <authorList>
            <person name="Bechtel S."/>
            <person name="Rosenfelder H."/>
            <person name="Duda A."/>
            <person name="Schmidt C.P."/>
            <person name="Ernst U."/>
            <person name="Wellenreuther R."/>
            <person name="Mehrle A."/>
            <person name="Schuster C."/>
            <person name="Bahr A."/>
            <person name="Bloecker H."/>
            <person name="Heubner D."/>
            <person name="Hoerlein A."/>
            <person name="Michel G."/>
            <person name="Wedler H."/>
            <person name="Koehrer K."/>
            <person name="Ottenwaelder B."/>
            <person name="Poustka A."/>
            <person name="Wiemann S."/>
            <person name="Schupp I."/>
        </authorList>
    </citation>
    <scope>NUCLEOTIDE SEQUENCE [LARGE SCALE MRNA] (ISOFORM 2)</scope>
    <source>
        <tissue>Small intestine</tissue>
    </source>
</reference>
<reference key="3">
    <citation type="journal article" date="2006" name="Nature">
        <title>DNA sequence of human chromosome 17 and analysis of rearrangement in the human lineage.</title>
        <authorList>
            <person name="Zody M.C."/>
            <person name="Garber M."/>
            <person name="Adams D.J."/>
            <person name="Sharpe T."/>
            <person name="Harrow J."/>
            <person name="Lupski J.R."/>
            <person name="Nicholson C."/>
            <person name="Searle S.M."/>
            <person name="Wilming L."/>
            <person name="Young S.K."/>
            <person name="Abouelleil A."/>
            <person name="Allen N.R."/>
            <person name="Bi W."/>
            <person name="Bloom T."/>
            <person name="Borowsky M.L."/>
            <person name="Bugalter B.E."/>
            <person name="Butler J."/>
            <person name="Chang J.L."/>
            <person name="Chen C.-K."/>
            <person name="Cook A."/>
            <person name="Corum B."/>
            <person name="Cuomo C.A."/>
            <person name="de Jong P.J."/>
            <person name="DeCaprio D."/>
            <person name="Dewar K."/>
            <person name="FitzGerald M."/>
            <person name="Gilbert J."/>
            <person name="Gibson R."/>
            <person name="Gnerre S."/>
            <person name="Goldstein S."/>
            <person name="Grafham D.V."/>
            <person name="Grocock R."/>
            <person name="Hafez N."/>
            <person name="Hagopian D.S."/>
            <person name="Hart E."/>
            <person name="Norman C.H."/>
            <person name="Humphray S."/>
            <person name="Jaffe D.B."/>
            <person name="Jones M."/>
            <person name="Kamal M."/>
            <person name="Khodiyar V.K."/>
            <person name="LaButti K."/>
            <person name="Laird G."/>
            <person name="Lehoczky J."/>
            <person name="Liu X."/>
            <person name="Lokyitsang T."/>
            <person name="Loveland J."/>
            <person name="Lui A."/>
            <person name="Macdonald P."/>
            <person name="Major J.E."/>
            <person name="Matthews L."/>
            <person name="Mauceli E."/>
            <person name="McCarroll S.A."/>
            <person name="Mihalev A.H."/>
            <person name="Mudge J."/>
            <person name="Nguyen C."/>
            <person name="Nicol R."/>
            <person name="O'Leary S.B."/>
            <person name="Osoegawa K."/>
            <person name="Schwartz D.C."/>
            <person name="Shaw-Smith C."/>
            <person name="Stankiewicz P."/>
            <person name="Steward C."/>
            <person name="Swarbreck D."/>
            <person name="Venkataraman V."/>
            <person name="Whittaker C.A."/>
            <person name="Yang X."/>
            <person name="Zimmer A.R."/>
            <person name="Bradley A."/>
            <person name="Hubbard T."/>
            <person name="Birren B.W."/>
            <person name="Rogers J."/>
            <person name="Lander E.S."/>
            <person name="Nusbaum C."/>
        </authorList>
    </citation>
    <scope>NUCLEOTIDE SEQUENCE [LARGE SCALE GENOMIC DNA]</scope>
</reference>
<reference key="4">
    <citation type="journal article" date="2009" name="Anal. Chem.">
        <title>Lys-N and trypsin cover complementary parts of the phosphoproteome in a refined SCX-based approach.</title>
        <authorList>
            <person name="Gauci S."/>
            <person name="Helbig A.O."/>
            <person name="Slijper M."/>
            <person name="Krijgsveld J."/>
            <person name="Heck A.J."/>
            <person name="Mohammed S."/>
        </authorList>
    </citation>
    <scope>IDENTIFICATION BY MASS SPECTROMETRY [LARGE SCALE ANALYSIS]</scope>
</reference>
<reference key="5">
    <citation type="journal article" date="2009" name="Sci. Signal.">
        <title>Quantitative phosphoproteomic analysis of T cell receptor signaling reveals system-wide modulation of protein-protein interactions.</title>
        <authorList>
            <person name="Mayya V."/>
            <person name="Lundgren D.H."/>
            <person name="Hwang S.-I."/>
            <person name="Rezaul K."/>
            <person name="Wu L."/>
            <person name="Eng J.K."/>
            <person name="Rodionov V."/>
            <person name="Han D.K."/>
        </authorList>
    </citation>
    <scope>PHOSPHORYLATION [LARGE SCALE ANALYSIS] AT THR-139</scope>
    <scope>IDENTIFICATION BY MASS SPECTROMETRY [LARGE SCALE ANALYSIS]</scope>
    <source>
        <tissue>Leukemic T-cell</tissue>
    </source>
</reference>
<reference key="6">
    <citation type="journal article" date="2010" name="Sci. Signal.">
        <title>Quantitative phosphoproteomics reveals widespread full phosphorylation site occupancy during mitosis.</title>
        <authorList>
            <person name="Olsen J.V."/>
            <person name="Vermeulen M."/>
            <person name="Santamaria A."/>
            <person name="Kumar C."/>
            <person name="Miller M.L."/>
            <person name="Jensen L.J."/>
            <person name="Gnad F."/>
            <person name="Cox J."/>
            <person name="Jensen T.S."/>
            <person name="Nigg E.A."/>
            <person name="Brunak S."/>
            <person name="Mann M."/>
        </authorList>
    </citation>
    <scope>PHOSPHORYLATION [LARGE SCALE ANALYSIS] AT THR-139</scope>
    <scope>IDENTIFICATION BY MASS SPECTROMETRY [LARGE SCALE ANALYSIS]</scope>
    <source>
        <tissue>Cervix carcinoma</tissue>
    </source>
</reference>
<reference key="7">
    <citation type="journal article" date="2011" name="BMC Syst. Biol.">
        <title>Initial characterization of the human central proteome.</title>
        <authorList>
            <person name="Burkard T.R."/>
            <person name="Planyavsky M."/>
            <person name="Kaupe I."/>
            <person name="Breitwieser F.P."/>
            <person name="Buerckstuemmer T."/>
            <person name="Bennett K.L."/>
            <person name="Superti-Furga G."/>
            <person name="Colinge J."/>
        </authorList>
    </citation>
    <scope>IDENTIFICATION BY MASS SPECTROMETRY [LARGE SCALE ANALYSIS]</scope>
</reference>
<reference key="8">
    <citation type="journal article" date="2011" name="Sci. Signal.">
        <title>System-wide temporal characterization of the proteome and phosphoproteome of human embryonic stem cell differentiation.</title>
        <authorList>
            <person name="Rigbolt K.T."/>
            <person name="Prokhorova T.A."/>
            <person name="Akimov V."/>
            <person name="Henningsen J."/>
            <person name="Johansen P.T."/>
            <person name="Kratchmarova I."/>
            <person name="Kassem M."/>
            <person name="Mann M."/>
            <person name="Olsen J.V."/>
            <person name="Blagoev B."/>
        </authorList>
    </citation>
    <scope>PHOSPHORYLATION [LARGE SCALE ANALYSIS] AT THR-139</scope>
    <scope>IDENTIFICATION BY MASS SPECTROMETRY [LARGE SCALE ANALYSIS]</scope>
</reference>
<reference key="9">
    <citation type="journal article" date="2013" name="J. Proteome Res.">
        <title>Toward a comprehensive characterization of a human cancer cell phosphoproteome.</title>
        <authorList>
            <person name="Zhou H."/>
            <person name="Di Palma S."/>
            <person name="Preisinger C."/>
            <person name="Peng M."/>
            <person name="Polat A.N."/>
            <person name="Heck A.J."/>
            <person name="Mohammed S."/>
        </authorList>
    </citation>
    <scope>PHOSPHORYLATION [LARGE SCALE ANALYSIS] AT THR-139</scope>
    <scope>IDENTIFICATION BY MASS SPECTROMETRY [LARGE SCALE ANALYSIS]</scope>
    <source>
        <tissue>Erythroleukemia</tissue>
    </source>
</reference>
<reference key="10">
    <citation type="journal article" date="2014" name="Proc. Natl. Acad. Sci. U.S.A.">
        <title>Mapping of SUMO sites and analysis of SUMOylation changes induced by external stimuli.</title>
        <authorList>
            <person name="Impens F."/>
            <person name="Radoshevich L."/>
            <person name="Cossart P."/>
            <person name="Ribet D."/>
        </authorList>
    </citation>
    <scope>SUMOYLATION [LARGE SCALE ANALYSIS] AT LYS-95</scope>
    <scope>IDENTIFICATION BY MASS SPECTROMETRY [LARGE SCALE ANALYSIS]</scope>
</reference>
<evidence type="ECO:0000255" key="1"/>
<evidence type="ECO:0000256" key="2">
    <source>
        <dbReference type="SAM" id="MobiDB-lite"/>
    </source>
</evidence>
<evidence type="ECO:0000303" key="3">
    <source>
    </source>
</evidence>
<evidence type="ECO:0000305" key="4"/>
<evidence type="ECO:0007744" key="5">
    <source>
    </source>
</evidence>
<evidence type="ECO:0007744" key="6">
    <source>
    </source>
</evidence>
<evidence type="ECO:0007744" key="7">
    <source>
    </source>
</evidence>
<evidence type="ECO:0007744" key="8">
    <source>
    </source>
</evidence>
<evidence type="ECO:0007744" key="9">
    <source>
    </source>
</evidence>
<gene>
    <name type="primary">CCDC43</name>
</gene>
<keyword id="KW-0025">Alternative splicing</keyword>
<keyword id="KW-0175">Coiled coil</keyword>
<keyword id="KW-1017">Isopeptide bond</keyword>
<keyword id="KW-0597">Phosphoprotein</keyword>
<keyword id="KW-1267">Proteomics identification</keyword>
<keyword id="KW-1185">Reference proteome</keyword>
<keyword id="KW-0832">Ubl conjugation</keyword>
<protein>
    <recommendedName>
        <fullName>Coiled-coil domain-containing protein 43</fullName>
    </recommendedName>
</protein>